<name>FA98A_PONAB</name>
<sequence>MECDLMETDILESLEDLGYKGPLLEDGALSQAVSAGASSPEFTKLCAWLVSELRVLCKLEENVQATNSPSEAEEFQLEVSGLLGEMNCPYLSLTSGDVTKRLLIQKNCLLLLTYLISELEAARMLCVNAPPKKAQEGGGSEVFQELEGICIALGMSKPPANITMFQFFSGIEKKLKETLAKVPPNHVGKPLLKKPMGPAHWEKIEAINQAIANEYEVRRKLLIKRLDVTVQSFGWSDRAKSQTEKLAKVYQPKRSVLSPKSTISVAHLLAARQDLSKILRTSSGSIGEKTACAINKVLMGRVPDRGGRPNEIEPPPPEMPPWQKRQDGPQQQTGGRGGGRGGYEHSSYGGRGGHEQGGGRGGRGGYDHGGRGGGRGNKHQGGWTDGGSGGGGGYQDGGYRDSGFQPGGYHGGHSSGGYQGGGYGGFQTSSSYTGSGYQGGGYQQDNRYQDGGHHGDRGGGRGGRGGRGGRGGRAGQGGGWGGRGSQNYHQGGQFEQHFQHGGYQYNHSGFGQGRHYTS</sequence>
<evidence type="ECO:0000250" key="1">
    <source>
        <dbReference type="UniProtKB" id="Q3TJZ6"/>
    </source>
</evidence>
<evidence type="ECO:0000250" key="2">
    <source>
        <dbReference type="UniProtKB" id="Q8NCA5"/>
    </source>
</evidence>
<evidence type="ECO:0000256" key="3">
    <source>
        <dbReference type="SAM" id="MobiDB-lite"/>
    </source>
</evidence>
<evidence type="ECO:0000305" key="4"/>
<proteinExistence type="evidence at transcript level"/>
<keyword id="KW-1185">Reference proteome</keyword>
<gene>
    <name evidence="2" type="primary">FAM98A</name>
</gene>
<comment type="function">
    <text evidence="1 2">Positively stimulates PRMT1-induced protein arginine methylation. Involved in skeletal homeostasis. Positively regulates lysosome peripheral distribution and ruffled border formation in osteoclasts.</text>
</comment>
<comment type="subunit">
    <text evidence="1 2">Interacts (via N- and C-terminus) with DDX1. Interacts (via N- and C-terminus) with C14orf166. Interacts with FAM98B. Interacts with PLEKHM1 (via N- and C-terminus).</text>
</comment>
<comment type="similarity">
    <text evidence="4">Belongs to the FAM98 family.</text>
</comment>
<protein>
    <recommendedName>
        <fullName evidence="2">Protein FAM98A</fullName>
    </recommendedName>
</protein>
<feature type="chain" id="PRO_0000187186" description="Protein FAM98A">
    <location>
        <begin position="1"/>
        <end position="518"/>
    </location>
</feature>
<feature type="region of interest" description="Disordered" evidence="3">
    <location>
        <begin position="300"/>
        <end position="415"/>
    </location>
</feature>
<feature type="region of interest" description="Disordered" evidence="3">
    <location>
        <begin position="434"/>
        <end position="518"/>
    </location>
</feature>
<feature type="compositionally biased region" description="Basic and acidic residues" evidence="3">
    <location>
        <begin position="302"/>
        <end position="311"/>
    </location>
</feature>
<feature type="compositionally biased region" description="Gly residues" evidence="3">
    <location>
        <begin position="349"/>
        <end position="364"/>
    </location>
</feature>
<feature type="compositionally biased region" description="Gly residues" evidence="3">
    <location>
        <begin position="383"/>
        <end position="396"/>
    </location>
</feature>
<feature type="compositionally biased region" description="Gly residues" evidence="3">
    <location>
        <begin position="405"/>
        <end position="415"/>
    </location>
</feature>
<feature type="compositionally biased region" description="Basic and acidic residues" evidence="3">
    <location>
        <begin position="447"/>
        <end position="459"/>
    </location>
</feature>
<feature type="compositionally biased region" description="Gly residues" evidence="3">
    <location>
        <begin position="460"/>
        <end position="484"/>
    </location>
</feature>
<feature type="compositionally biased region" description="Low complexity" evidence="3">
    <location>
        <begin position="488"/>
        <end position="504"/>
    </location>
</feature>
<feature type="compositionally biased region" description="Polar residues" evidence="3">
    <location>
        <begin position="505"/>
        <end position="518"/>
    </location>
</feature>
<accession>Q5R679</accession>
<reference key="1">
    <citation type="submission" date="2004-11" db="EMBL/GenBank/DDBJ databases">
        <authorList>
            <consortium name="The German cDNA consortium"/>
        </authorList>
    </citation>
    <scope>NUCLEOTIDE SEQUENCE [LARGE SCALE MRNA]</scope>
    <source>
        <tissue>Brain cortex</tissue>
    </source>
</reference>
<dbReference type="EMBL" id="CR860616">
    <property type="protein sequence ID" value="CAH92737.1"/>
    <property type="molecule type" value="mRNA"/>
</dbReference>
<dbReference type="RefSeq" id="NP_001126597.1">
    <property type="nucleotide sequence ID" value="NM_001133125.1"/>
</dbReference>
<dbReference type="FunCoup" id="Q5R679">
    <property type="interactions" value="2255"/>
</dbReference>
<dbReference type="STRING" id="9601.ENSPPYP00000013960"/>
<dbReference type="GeneID" id="100173593"/>
<dbReference type="KEGG" id="pon:100173593"/>
<dbReference type="CTD" id="25940"/>
<dbReference type="eggNOG" id="KOG3973">
    <property type="taxonomic scope" value="Eukaryota"/>
</dbReference>
<dbReference type="InParanoid" id="Q5R679"/>
<dbReference type="OrthoDB" id="512356at2759"/>
<dbReference type="Proteomes" id="UP000001595">
    <property type="component" value="Unplaced"/>
</dbReference>
<dbReference type="GO" id="GO:0072669">
    <property type="term" value="C:tRNA-splicing ligase complex"/>
    <property type="evidence" value="ECO:0007669"/>
    <property type="project" value="TreeGrafter"/>
</dbReference>
<dbReference type="GO" id="GO:0008276">
    <property type="term" value="F:protein methyltransferase activity"/>
    <property type="evidence" value="ECO:0000250"/>
    <property type="project" value="UniProtKB"/>
</dbReference>
<dbReference type="GO" id="GO:0032418">
    <property type="term" value="P:lysosome localization"/>
    <property type="evidence" value="ECO:0000250"/>
    <property type="project" value="UniProtKB"/>
</dbReference>
<dbReference type="GO" id="GO:0008284">
    <property type="term" value="P:positive regulation of cell population proliferation"/>
    <property type="evidence" value="ECO:0000250"/>
    <property type="project" value="UniProtKB"/>
</dbReference>
<dbReference type="GO" id="GO:0010628">
    <property type="term" value="P:positive regulation of gene expression"/>
    <property type="evidence" value="ECO:0000250"/>
    <property type="project" value="UniProtKB"/>
</dbReference>
<dbReference type="GO" id="GO:1900029">
    <property type="term" value="P:positive regulation of ruffle assembly"/>
    <property type="evidence" value="ECO:0000250"/>
    <property type="project" value="UniProtKB"/>
</dbReference>
<dbReference type="GO" id="GO:0006479">
    <property type="term" value="P:protein methylation"/>
    <property type="evidence" value="ECO:0000250"/>
    <property type="project" value="UniProtKB"/>
</dbReference>
<dbReference type="InterPro" id="IPR018797">
    <property type="entry name" value="FAM98"/>
</dbReference>
<dbReference type="PANTHER" id="PTHR31353">
    <property type="entry name" value="FAM98"/>
    <property type="match status" value="1"/>
</dbReference>
<dbReference type="PANTHER" id="PTHR31353:SF9">
    <property type="entry name" value="PROTEIN FAM98A"/>
    <property type="match status" value="1"/>
</dbReference>
<dbReference type="Pfam" id="PF10239">
    <property type="entry name" value="DUF2465"/>
    <property type="match status" value="1"/>
</dbReference>
<organism>
    <name type="scientific">Pongo abelii</name>
    <name type="common">Sumatran orangutan</name>
    <name type="synonym">Pongo pygmaeus abelii</name>
    <dbReference type="NCBI Taxonomy" id="9601"/>
    <lineage>
        <taxon>Eukaryota</taxon>
        <taxon>Metazoa</taxon>
        <taxon>Chordata</taxon>
        <taxon>Craniata</taxon>
        <taxon>Vertebrata</taxon>
        <taxon>Euteleostomi</taxon>
        <taxon>Mammalia</taxon>
        <taxon>Eutheria</taxon>
        <taxon>Euarchontoglires</taxon>
        <taxon>Primates</taxon>
        <taxon>Haplorrhini</taxon>
        <taxon>Catarrhini</taxon>
        <taxon>Hominidae</taxon>
        <taxon>Pongo</taxon>
    </lineage>
</organism>